<reference key="1">
    <citation type="journal article" date="2004" name="Genome Res.">
        <title>The status, quality, and expansion of the NIH full-length cDNA project: the Mammalian Gene Collection (MGC).</title>
        <authorList>
            <consortium name="The MGC Project Team"/>
        </authorList>
    </citation>
    <scope>NUCLEOTIDE SEQUENCE [LARGE SCALE MRNA]</scope>
    <source>
        <tissue>Spleen</tissue>
    </source>
</reference>
<gene>
    <name type="primary">Wdr89</name>
</gene>
<keyword id="KW-1185">Reference proteome</keyword>
<keyword id="KW-0677">Repeat</keyword>
<keyword id="KW-0853">WD repeat</keyword>
<accession>Q5FVP5</accession>
<sequence>MEKIKDQFANLHILRRSSEPKEPTYLLGIDTSKTVPAEKGGLVAVLCSNGSIRIYDKETLNLLREFSGSPGLLNGVRFANSCDNVYSASTDGTVKCWDARLASEKPAQLFKGYPSNIFISFDVNCKDHIICAGAEKVEDDALLVFWDARFTSQDLSTRDPLGAYSETHSDDITQVRFHPSNPNMVVSGSTDGLVNVFDLSVDNEEDALVATCNSVSSVSCIGWCGRDYKQIYCMTHDEGFCWWDLNHLDTDEPITCLNIQDVRDVTDVKEGHLDYLIGGLYHENMDRLFVIGGTNLGKIHLLSCTKTGLSHVTSLQGGHAATVRSFCWTVSEDSLLTGGEDAQLLLWKPGAVEKTFTKKDSLKIASSVQQRVRVHSSDSYKKRKQQ</sequence>
<protein>
    <recommendedName>
        <fullName>WD repeat-containing protein 89</fullName>
    </recommendedName>
</protein>
<organism>
    <name type="scientific">Rattus norvegicus</name>
    <name type="common">Rat</name>
    <dbReference type="NCBI Taxonomy" id="10116"/>
    <lineage>
        <taxon>Eukaryota</taxon>
        <taxon>Metazoa</taxon>
        <taxon>Chordata</taxon>
        <taxon>Craniata</taxon>
        <taxon>Vertebrata</taxon>
        <taxon>Euteleostomi</taxon>
        <taxon>Mammalia</taxon>
        <taxon>Eutheria</taxon>
        <taxon>Euarchontoglires</taxon>
        <taxon>Glires</taxon>
        <taxon>Rodentia</taxon>
        <taxon>Myomorpha</taxon>
        <taxon>Muroidea</taxon>
        <taxon>Muridae</taxon>
        <taxon>Murinae</taxon>
        <taxon>Rattus</taxon>
    </lineage>
</organism>
<name>WDR89_RAT</name>
<dbReference type="EMBL" id="BC089849">
    <property type="protein sequence ID" value="AAH89849.1"/>
    <property type="molecule type" value="mRNA"/>
</dbReference>
<dbReference type="RefSeq" id="NP_001014100.1">
    <property type="nucleotide sequence ID" value="NM_001014078.2"/>
</dbReference>
<dbReference type="RefSeq" id="XP_006240297.5">
    <property type="nucleotide sequence ID" value="XM_006240235.5"/>
</dbReference>
<dbReference type="RefSeq" id="XP_017449629.1">
    <property type="nucleotide sequence ID" value="XM_017594140.1"/>
</dbReference>
<dbReference type="SMR" id="Q5FVP5"/>
<dbReference type="FunCoup" id="Q5FVP5">
    <property type="interactions" value="1613"/>
</dbReference>
<dbReference type="STRING" id="10116.ENSRNOP00000006860"/>
<dbReference type="PhosphoSitePlus" id="Q5FVP5"/>
<dbReference type="PaxDb" id="10116-ENSRNOP00000006860"/>
<dbReference type="Ensembl" id="ENSRNOT00000103901.1">
    <property type="protein sequence ID" value="ENSRNOP00000095204.1"/>
    <property type="gene ID" value="ENSRNOG00000021628.4"/>
</dbReference>
<dbReference type="GeneID" id="314243"/>
<dbReference type="KEGG" id="rno:314243"/>
<dbReference type="UCSC" id="RGD:1307393">
    <property type="organism name" value="rat"/>
</dbReference>
<dbReference type="AGR" id="RGD:1307393"/>
<dbReference type="CTD" id="112840"/>
<dbReference type="RGD" id="1307393">
    <property type="gene designation" value="Wdr89"/>
</dbReference>
<dbReference type="eggNOG" id="KOG1188">
    <property type="taxonomic scope" value="Eukaryota"/>
</dbReference>
<dbReference type="GeneTree" id="ENSGT00390000006996"/>
<dbReference type="HOGENOM" id="CLU_037323_4_0_1"/>
<dbReference type="InParanoid" id="Q5FVP5"/>
<dbReference type="PhylomeDB" id="Q5FVP5"/>
<dbReference type="TreeFam" id="TF324390"/>
<dbReference type="PRO" id="PR:Q5FVP5"/>
<dbReference type="Proteomes" id="UP000002494">
    <property type="component" value="Chromosome 6"/>
</dbReference>
<dbReference type="Bgee" id="ENSRNOG00000021628">
    <property type="expression patterns" value="Expressed in kidney and 20 other cell types or tissues"/>
</dbReference>
<dbReference type="GO" id="GO:0022038">
    <property type="term" value="P:corpus callosum development"/>
    <property type="evidence" value="ECO:0000266"/>
    <property type="project" value="RGD"/>
</dbReference>
<dbReference type="GO" id="GO:0021591">
    <property type="term" value="P:ventricular system development"/>
    <property type="evidence" value="ECO:0000266"/>
    <property type="project" value="RGD"/>
</dbReference>
<dbReference type="Gene3D" id="2.130.10.10">
    <property type="entry name" value="YVTN repeat-like/Quinoprotein amine dehydrogenase"/>
    <property type="match status" value="2"/>
</dbReference>
<dbReference type="InterPro" id="IPR015943">
    <property type="entry name" value="WD40/YVTN_repeat-like_dom_sf"/>
</dbReference>
<dbReference type="InterPro" id="IPR036322">
    <property type="entry name" value="WD40_repeat_dom_sf"/>
</dbReference>
<dbReference type="InterPro" id="IPR001680">
    <property type="entry name" value="WD40_rpt"/>
</dbReference>
<dbReference type="InterPro" id="IPR039328">
    <property type="entry name" value="WDR89"/>
</dbReference>
<dbReference type="PANTHER" id="PTHR22889">
    <property type="entry name" value="WD REPEAT-CONTAINING PROTEIN 89"/>
    <property type="match status" value="1"/>
</dbReference>
<dbReference type="PANTHER" id="PTHR22889:SF0">
    <property type="entry name" value="WD REPEAT-CONTAINING PROTEIN 89"/>
    <property type="match status" value="1"/>
</dbReference>
<dbReference type="Pfam" id="PF00400">
    <property type="entry name" value="WD40"/>
    <property type="match status" value="3"/>
</dbReference>
<dbReference type="SMART" id="SM00320">
    <property type="entry name" value="WD40"/>
    <property type="match status" value="4"/>
</dbReference>
<dbReference type="SUPFAM" id="SSF50978">
    <property type="entry name" value="WD40 repeat-like"/>
    <property type="match status" value="1"/>
</dbReference>
<dbReference type="PROSITE" id="PS50082">
    <property type="entry name" value="WD_REPEATS_2"/>
    <property type="match status" value="3"/>
</dbReference>
<dbReference type="PROSITE" id="PS50294">
    <property type="entry name" value="WD_REPEATS_REGION"/>
    <property type="match status" value="3"/>
</dbReference>
<feature type="chain" id="PRO_0000330846" description="WD repeat-containing protein 89">
    <location>
        <begin position="1"/>
        <end position="386"/>
    </location>
</feature>
<feature type="repeat" description="WD 1">
    <location>
        <begin position="21"/>
        <end position="65"/>
    </location>
</feature>
<feature type="repeat" description="WD 2">
    <location>
        <begin position="68"/>
        <end position="107"/>
    </location>
</feature>
<feature type="repeat" description="WD 3">
    <location>
        <begin position="112"/>
        <end position="156"/>
    </location>
</feature>
<feature type="repeat" description="WD 4">
    <location>
        <begin position="167"/>
        <end position="207"/>
    </location>
</feature>
<feature type="repeat" description="WD 5">
    <location>
        <begin position="213"/>
        <end position="253"/>
    </location>
</feature>
<feature type="repeat" description="WD 6">
    <location>
        <begin position="318"/>
        <end position="357"/>
    </location>
</feature>
<proteinExistence type="evidence at transcript level"/>